<protein>
    <recommendedName>
        <fullName evidence="5">FAD-dependent monooxygenase asqG</fullName>
        <ecNumber evidence="4">1.-.-.-</ecNumber>
    </recommendedName>
    <alternativeName>
        <fullName evidence="6">4'-methoxyviridicatin/aspoquinolone biosynthesis cluster protein asqG</fullName>
    </alternativeName>
    <alternativeName>
        <fullName evidence="5">Aspoquinolone biosynthesis protein G</fullName>
    </alternativeName>
</protein>
<keyword id="KW-0274">FAD</keyword>
<keyword id="KW-0285">Flavoprotein</keyword>
<keyword id="KW-0472">Membrane</keyword>
<keyword id="KW-0503">Monooxygenase</keyword>
<keyword id="KW-0560">Oxidoreductase</keyword>
<keyword id="KW-1185">Reference proteome</keyword>
<keyword id="KW-0732">Signal</keyword>
<keyword id="KW-0812">Transmembrane</keyword>
<keyword id="KW-1133">Transmembrane helix</keyword>
<evidence type="ECO:0000250" key="1">
    <source>
        <dbReference type="UniProtKB" id="B8M9J8"/>
    </source>
</evidence>
<evidence type="ECO:0000255" key="2"/>
<evidence type="ECO:0000269" key="3">
    <source>
    </source>
</evidence>
<evidence type="ECO:0000269" key="4">
    <source>
    </source>
</evidence>
<evidence type="ECO:0000303" key="5">
    <source>
    </source>
</evidence>
<evidence type="ECO:0000305" key="6"/>
<reference key="1">
    <citation type="journal article" date="2005" name="Nature">
        <title>Sequencing of Aspergillus nidulans and comparative analysis with A. fumigatus and A. oryzae.</title>
        <authorList>
            <person name="Galagan J.E."/>
            <person name="Calvo S.E."/>
            <person name="Cuomo C."/>
            <person name="Ma L.-J."/>
            <person name="Wortman J.R."/>
            <person name="Batzoglou S."/>
            <person name="Lee S.-I."/>
            <person name="Bastuerkmen M."/>
            <person name="Spevak C.C."/>
            <person name="Clutterbuck J."/>
            <person name="Kapitonov V."/>
            <person name="Jurka J."/>
            <person name="Scazzocchio C."/>
            <person name="Farman M.L."/>
            <person name="Butler J."/>
            <person name="Purcell S."/>
            <person name="Harris S."/>
            <person name="Braus G.H."/>
            <person name="Draht O."/>
            <person name="Busch S."/>
            <person name="D'Enfert C."/>
            <person name="Bouchier C."/>
            <person name="Goldman G.H."/>
            <person name="Bell-Pedersen D."/>
            <person name="Griffiths-Jones S."/>
            <person name="Doonan J.H."/>
            <person name="Yu J."/>
            <person name="Vienken K."/>
            <person name="Pain A."/>
            <person name="Freitag M."/>
            <person name="Selker E.U."/>
            <person name="Archer D.B."/>
            <person name="Penalva M.A."/>
            <person name="Oakley B.R."/>
            <person name="Momany M."/>
            <person name="Tanaka T."/>
            <person name="Kumagai T."/>
            <person name="Asai K."/>
            <person name="Machida M."/>
            <person name="Nierman W.C."/>
            <person name="Denning D.W."/>
            <person name="Caddick M.X."/>
            <person name="Hynes M."/>
            <person name="Paoletti M."/>
            <person name="Fischer R."/>
            <person name="Miller B.L."/>
            <person name="Dyer P.S."/>
            <person name="Sachs M.S."/>
            <person name="Osmani S.A."/>
            <person name="Birren B.W."/>
        </authorList>
    </citation>
    <scope>NUCLEOTIDE SEQUENCE [LARGE SCALE GENOMIC DNA]</scope>
    <source>
        <strain>FGSC A4 / ATCC 38163 / CBS 112.46 / NRRL 194 / M139</strain>
    </source>
</reference>
<reference key="2">
    <citation type="journal article" date="2009" name="Fungal Genet. Biol.">
        <title>The 2008 update of the Aspergillus nidulans genome annotation: a community effort.</title>
        <authorList>
            <person name="Wortman J.R."/>
            <person name="Gilsenan J.M."/>
            <person name="Joardar V."/>
            <person name="Deegan J."/>
            <person name="Clutterbuck J."/>
            <person name="Andersen M.R."/>
            <person name="Archer D."/>
            <person name="Bencina M."/>
            <person name="Braus G."/>
            <person name="Coutinho P."/>
            <person name="von Dohren H."/>
            <person name="Doonan J."/>
            <person name="Driessen A.J."/>
            <person name="Durek P."/>
            <person name="Espeso E."/>
            <person name="Fekete E."/>
            <person name="Flipphi M."/>
            <person name="Estrada C.G."/>
            <person name="Geysens S."/>
            <person name="Goldman G."/>
            <person name="de Groot P.W."/>
            <person name="Hansen K."/>
            <person name="Harris S.D."/>
            <person name="Heinekamp T."/>
            <person name="Helmstaedt K."/>
            <person name="Henrissat B."/>
            <person name="Hofmann G."/>
            <person name="Homan T."/>
            <person name="Horio T."/>
            <person name="Horiuchi H."/>
            <person name="James S."/>
            <person name="Jones M."/>
            <person name="Karaffa L."/>
            <person name="Karanyi Z."/>
            <person name="Kato M."/>
            <person name="Keller N."/>
            <person name="Kelly D.E."/>
            <person name="Kiel J.A."/>
            <person name="Kim J.M."/>
            <person name="van der Klei I.J."/>
            <person name="Klis F.M."/>
            <person name="Kovalchuk A."/>
            <person name="Krasevec N."/>
            <person name="Kubicek C.P."/>
            <person name="Liu B."/>
            <person name="Maccabe A."/>
            <person name="Meyer V."/>
            <person name="Mirabito P."/>
            <person name="Miskei M."/>
            <person name="Mos M."/>
            <person name="Mullins J."/>
            <person name="Nelson D.R."/>
            <person name="Nielsen J."/>
            <person name="Oakley B.R."/>
            <person name="Osmani S.A."/>
            <person name="Pakula T."/>
            <person name="Paszewski A."/>
            <person name="Paulsen I."/>
            <person name="Pilsyk S."/>
            <person name="Pocsi I."/>
            <person name="Punt P.J."/>
            <person name="Ram A.F."/>
            <person name="Ren Q."/>
            <person name="Robellet X."/>
            <person name="Robson G."/>
            <person name="Seiboth B."/>
            <person name="van Solingen P."/>
            <person name="Specht T."/>
            <person name="Sun J."/>
            <person name="Taheri-Talesh N."/>
            <person name="Takeshita N."/>
            <person name="Ussery D."/>
            <person name="vanKuyk P.A."/>
            <person name="Visser H."/>
            <person name="van de Vondervoort P.J."/>
            <person name="de Vries R.P."/>
            <person name="Walton J."/>
            <person name="Xiang X."/>
            <person name="Xiong Y."/>
            <person name="Zeng A.P."/>
            <person name="Brandt B.W."/>
            <person name="Cornell M.J."/>
            <person name="van den Hondel C.A."/>
            <person name="Visser J."/>
            <person name="Oliver S.G."/>
            <person name="Turner G."/>
        </authorList>
    </citation>
    <scope>GENOME REANNOTATION</scope>
    <source>
        <strain>FGSC A4 / ATCC 38163 / CBS 112.46 / NRRL 194 / M139</strain>
    </source>
</reference>
<reference key="3">
    <citation type="journal article" date="2014" name="Angew. Chem. Int. Ed.">
        <title>Non-heme dioxygenase catalyzes atypical oxidations of 6,7-bicyclic systems to form the 6,6-quinolone core of viridicatin-type fungal alkaloids.</title>
        <authorList>
            <person name="Ishikawa N."/>
            <person name="Tanaka H."/>
            <person name="Koyama F."/>
            <person name="Noguchi H."/>
            <person name="Wang C.C."/>
            <person name="Hotta K."/>
            <person name="Watanabe K."/>
        </authorList>
    </citation>
    <scope>FUNCTION</scope>
</reference>
<reference key="4">
    <citation type="journal article" date="2017" name="Nat. Chem. Biol.">
        <title>Enzyme-catalyzed cationic epoxide rearrangements in quinolone alkaloid biosynthesis.</title>
        <authorList>
            <person name="Zou Y."/>
            <person name="Garcia-Borras M."/>
            <person name="Tang M.C."/>
            <person name="Hirayama Y."/>
            <person name="Li D.H."/>
            <person name="Li L."/>
            <person name="Watanabe K."/>
            <person name="Houk K.N."/>
            <person name="Tang Y."/>
        </authorList>
    </citation>
    <scope>FUNCTION</scope>
    <scope>CATALYTIC ACTIVITY</scope>
    <scope>PATHWAY</scope>
</reference>
<comment type="function">
    <text evidence="3 4 6">FAD-dependent monooxygenase; part of the gene cluster that mediates the biosynthesis of the aspoquinolone mycotoxins (PubMed:25251934, PubMed:28114276). Within the pathway, the FAD-dependent monooxygenase asqG catalyzes the epoxidation of the terminal C7'-C8' olefin to produce the intermediate [(1'E)-5'-(3',3'-dimethyloxiran-2'-yl)-3'-hydroxy-3'-methylpent-1'-en-1'-yl]-quinolinone B (PubMed:28114276). The first step of the pathway is catalyzed by the nonribosomal peptide synthetase asqK that condenses anthranilic acid and O-methyl-L-tyrosine to produce 4'-methoxycyclopeptin. 4'-methoxycyclopeptin is then converted to 4'-methoxydehydrocyclopeptin by the ketoglutarate-dependent dioxygenase asqJ. AsqJ also converts its first product 4'-methoxydehydrocyclopeptin to 4'-methoxycyclopenin. The following conversion of 4'-methoxycyclopenin into 4'-methoxyviridicatin is catalyzed by the cyclopenase asqI. 4'-methoxyviridicatin is the precursor of quinolone natural products, and is further converted to quinolinone B. The prenyltransferase asqH1 then catalyzes the canonical Friedel-Crafts alkylation of quinolinone B with dimethylallyl cation to yield dimethylallyl quinolone, which is subjected to FAD-dependent dehydrogenation by the FAD-linked oxidoreductase asqF to yield conjugated aryl diene. The delta(3') double bond then serves as the site of the second alkylation with DMAPP catalyzed by the prenyltransferase asqH2 to yield a carbenium ion intermediate, which can be attacked by H(2)O to yield a styrenyl quinolone containing a C3'-hydroxyprenyl chain. The FAD-dependent monooxygenase asqG performs epoxidation of the terminal C7'-C8' olefin. Finally, after dehydratation of the epoxide at C3 by asqC, the quinolone epoxide rearrangement protein asqO catalyzes an enzymatic 3-exo-tet cyclization to yield the cyclopropyl-THF ring system in aspoquinolone (Probable).</text>
</comment>
<comment type="catalytic activity">
    <reaction evidence="4">
        <text>[(1'E)-3'-hydroxy-3',7'-dimethylocta-1',6'-dien-1'-yl]-quinolinone B + NADPH + O2 + H(+) = [(1'E)-5'-(3',3'-dimethyloxiran-2'-yl)-3'-hydroxy-3'-methylpent-1'-en-1'-yl]-quinolinone B + NADP(+) + H2O</text>
        <dbReference type="Rhea" id="RHEA:74011"/>
        <dbReference type="ChEBI" id="CHEBI:15377"/>
        <dbReference type="ChEBI" id="CHEBI:15378"/>
        <dbReference type="ChEBI" id="CHEBI:15379"/>
        <dbReference type="ChEBI" id="CHEBI:57783"/>
        <dbReference type="ChEBI" id="CHEBI:58349"/>
        <dbReference type="ChEBI" id="CHEBI:193078"/>
        <dbReference type="ChEBI" id="CHEBI:193079"/>
    </reaction>
    <physiologicalReaction direction="left-to-right" evidence="4">
        <dbReference type="Rhea" id="RHEA:74012"/>
    </physiologicalReaction>
</comment>
<comment type="cofactor">
    <cofactor evidence="6">
        <name>FAD</name>
        <dbReference type="ChEBI" id="CHEBI:57692"/>
    </cofactor>
</comment>
<comment type="pathway">
    <text evidence="4">Secondary metabolite biosynthesis.</text>
</comment>
<comment type="pathway">
    <text evidence="4">Alkaloid biosynthesis.</text>
</comment>
<comment type="pathway">
    <text evidence="4">Mycotoxin biosynthesis.</text>
</comment>
<comment type="subcellular location">
    <subcellularLocation>
        <location evidence="2">Membrane</location>
        <topology evidence="2">Multi-pass membrane protein</topology>
    </subcellularLocation>
</comment>
<comment type="similarity">
    <text evidence="6">Belongs to the paxM FAD-dependent monooxygenase family.</text>
</comment>
<sequence>MAAFTVIIIGGSISGLTLANVLEKYGIKYILLEKRPSIGPQLGATVVVHPSGLHLLSQLGLRERVEELATPVELQKAIGPDGTFVLNIAATNQCDRTIADALSTGYMPMFIARQDLIKVLYDNLQDKFRVHASLGLRELEWAGDKVKVTTTDGTSVVGDIVVGADGANSRTRAEIWKIADVEDPSYGSQQLAKSIACTYRCVFGMVDDGDSSLARTAYLAFQYNRAYTYLPTDSGRAYFLAFFKNPAKTVNDAIPRYSDQDEDADVAAHANDIIVPGLTFGDLYKRRTRCTLVPLQEYLLDKCFYKRVVLIGDAVHKLNPITGRGANLAIEGAALLGDLIKHALEKSLQPTDEMLQTAFFTYQQCTKSRAPSQIDDAHRVQSLAALENPLLKFMSLKLLKRATADKLALGVAVDFSTGHSMRYLPQLPQRGMVPLNKDVVANPEHRPASSTVLWIILMLGMASLGAVWQKHQRAEEDQPIHGYTLLTLSTFYNLMILFASAVHGSLGRRAVNLSFSDDSGMVPFYAVGHAPDKYRPTTPSRRVGLLVPGPSYLGSGGHFNGLLEVA</sequence>
<accession>Q5AR50</accession>
<accession>C8VJP9</accession>
<dbReference type="EC" id="1.-.-.-" evidence="4"/>
<dbReference type="EMBL" id="BN001306">
    <property type="protein sequence ID" value="CBF82272.1"/>
    <property type="molecule type" value="Genomic_DNA"/>
</dbReference>
<dbReference type="EMBL" id="AACD01000170">
    <property type="protein sequence ID" value="EAA61521.1"/>
    <property type="molecule type" value="Genomic_DNA"/>
</dbReference>
<dbReference type="RefSeq" id="XP_682499.1">
    <property type="nucleotide sequence ID" value="XM_677407.1"/>
</dbReference>
<dbReference type="SMR" id="Q5AR50"/>
<dbReference type="STRING" id="227321.Q5AR50"/>
<dbReference type="EnsemblFungi" id="CBF82272">
    <property type="protein sequence ID" value="CBF82272"/>
    <property type="gene ID" value="ANIA_09230"/>
</dbReference>
<dbReference type="KEGG" id="ani:ANIA_09230"/>
<dbReference type="eggNOG" id="KOG2614">
    <property type="taxonomic scope" value="Eukaryota"/>
</dbReference>
<dbReference type="HOGENOM" id="CLU_009665_12_2_1"/>
<dbReference type="InParanoid" id="Q5AR50"/>
<dbReference type="OMA" id="RELEWAG"/>
<dbReference type="OrthoDB" id="10029326at2759"/>
<dbReference type="BioCyc" id="MetaCyc:MONOMER-124180"/>
<dbReference type="Proteomes" id="UP000000560">
    <property type="component" value="Chromosome VI"/>
</dbReference>
<dbReference type="GO" id="GO:0016020">
    <property type="term" value="C:membrane"/>
    <property type="evidence" value="ECO:0007669"/>
    <property type="project" value="UniProtKB-SubCell"/>
</dbReference>
<dbReference type="GO" id="GO:0071949">
    <property type="term" value="F:FAD binding"/>
    <property type="evidence" value="ECO:0007669"/>
    <property type="project" value="InterPro"/>
</dbReference>
<dbReference type="GO" id="GO:0004497">
    <property type="term" value="F:monooxygenase activity"/>
    <property type="evidence" value="ECO:0007669"/>
    <property type="project" value="UniProtKB-KW"/>
</dbReference>
<dbReference type="GO" id="GO:0044550">
    <property type="term" value="P:secondary metabolite biosynthetic process"/>
    <property type="evidence" value="ECO:0000318"/>
    <property type="project" value="GO_Central"/>
</dbReference>
<dbReference type="Gene3D" id="3.50.50.60">
    <property type="entry name" value="FAD/NAD(P)-binding domain"/>
    <property type="match status" value="1"/>
</dbReference>
<dbReference type="InterPro" id="IPR002938">
    <property type="entry name" value="FAD-bd"/>
</dbReference>
<dbReference type="InterPro" id="IPR036188">
    <property type="entry name" value="FAD/NAD-bd_sf"/>
</dbReference>
<dbReference type="InterPro" id="IPR050562">
    <property type="entry name" value="FAD_mOase_fung"/>
</dbReference>
<dbReference type="PANTHER" id="PTHR47356:SF2">
    <property type="entry name" value="FAD-BINDING DOMAIN-CONTAINING PROTEIN-RELATED"/>
    <property type="match status" value="1"/>
</dbReference>
<dbReference type="PANTHER" id="PTHR47356">
    <property type="entry name" value="FAD-DEPENDENT MONOOXYGENASE ASQG-RELATED"/>
    <property type="match status" value="1"/>
</dbReference>
<dbReference type="Pfam" id="PF01494">
    <property type="entry name" value="FAD_binding_3"/>
    <property type="match status" value="1"/>
</dbReference>
<dbReference type="PRINTS" id="PR00420">
    <property type="entry name" value="RNGMNOXGNASE"/>
</dbReference>
<dbReference type="SUPFAM" id="SSF51905">
    <property type="entry name" value="FAD/NAD(P)-binding domain"/>
    <property type="match status" value="1"/>
</dbReference>
<gene>
    <name evidence="5" type="primary">asqG</name>
    <name type="ORF">AN9230</name>
</gene>
<organism>
    <name type="scientific">Emericella nidulans (strain FGSC A4 / ATCC 38163 / CBS 112.46 / NRRL 194 / M139)</name>
    <name type="common">Aspergillus nidulans</name>
    <dbReference type="NCBI Taxonomy" id="227321"/>
    <lineage>
        <taxon>Eukaryota</taxon>
        <taxon>Fungi</taxon>
        <taxon>Dikarya</taxon>
        <taxon>Ascomycota</taxon>
        <taxon>Pezizomycotina</taxon>
        <taxon>Eurotiomycetes</taxon>
        <taxon>Eurotiomycetidae</taxon>
        <taxon>Eurotiales</taxon>
        <taxon>Aspergillaceae</taxon>
        <taxon>Aspergillus</taxon>
        <taxon>Aspergillus subgen. Nidulantes</taxon>
    </lineage>
</organism>
<feature type="signal peptide" evidence="2">
    <location>
        <begin position="1"/>
        <end position="19"/>
    </location>
</feature>
<feature type="chain" id="PRO_0000437618" description="FAD-dependent monooxygenase asqG">
    <location>
        <begin position="20"/>
        <end position="566"/>
    </location>
</feature>
<feature type="transmembrane region" description="Helical" evidence="2">
    <location>
        <begin position="448"/>
        <end position="468"/>
    </location>
</feature>
<feature type="transmembrane region" description="Helical" evidence="2">
    <location>
        <begin position="482"/>
        <end position="502"/>
    </location>
</feature>
<feature type="binding site" evidence="1">
    <location>
        <position position="33"/>
    </location>
    <ligand>
        <name>FAD</name>
        <dbReference type="ChEBI" id="CHEBI:57692"/>
    </ligand>
</feature>
<feature type="binding site" evidence="1">
    <location>
        <position position="47"/>
    </location>
    <ligand>
        <name>FAD</name>
        <dbReference type="ChEBI" id="CHEBI:57692"/>
    </ligand>
</feature>
<feature type="binding site" evidence="1">
    <location>
        <position position="113"/>
    </location>
    <ligand>
        <name>FAD</name>
        <dbReference type="ChEBI" id="CHEBI:57692"/>
    </ligand>
</feature>
<feature type="binding site" evidence="1">
    <location>
        <position position="313"/>
    </location>
    <ligand>
        <name>FAD</name>
        <dbReference type="ChEBI" id="CHEBI:57692"/>
    </ligand>
</feature>
<feature type="binding site" evidence="1">
    <location>
        <position position="326"/>
    </location>
    <ligand>
        <name>FAD</name>
        <dbReference type="ChEBI" id="CHEBI:57692"/>
    </ligand>
</feature>
<proteinExistence type="evidence at protein level"/>
<name>ASQG_EMENI</name>